<dbReference type="EMBL" id="AF169388">
    <property type="protein sequence ID" value="AAD50450.1"/>
    <property type="molecule type" value="mRNA"/>
</dbReference>
<dbReference type="EMBL" id="BC117709">
    <property type="protein sequence ID" value="AAI17710.1"/>
    <property type="molecule type" value="mRNA"/>
</dbReference>
<dbReference type="EMBL" id="Z35167">
    <property type="protein sequence ID" value="CAA84530.1"/>
    <property type="molecule type" value="mRNA"/>
</dbReference>
<dbReference type="CCDS" id="CCDS35630.1">
    <molecule id="Q9QZR9-1"/>
</dbReference>
<dbReference type="PIR" id="I48303">
    <property type="entry name" value="I48303"/>
</dbReference>
<dbReference type="RefSeq" id="NP_031761.1">
    <molecule id="Q9QZR9-1"/>
    <property type="nucleotide sequence ID" value="NM_007735.2"/>
</dbReference>
<dbReference type="BioGRID" id="198819">
    <property type="interactions" value="1"/>
</dbReference>
<dbReference type="ComplexPortal" id="CPX-2961">
    <property type="entry name" value="Collagen type IV trimer variant 3"/>
</dbReference>
<dbReference type="FunCoup" id="Q9QZR9">
    <property type="interactions" value="448"/>
</dbReference>
<dbReference type="STRING" id="10090.ENSMUSP00000084282"/>
<dbReference type="GlyCosmos" id="Q9QZR9">
    <property type="glycosylation" value="3 sites, No reported glycans"/>
</dbReference>
<dbReference type="GlyGen" id="Q9QZR9">
    <property type="glycosylation" value="5 sites"/>
</dbReference>
<dbReference type="iPTMnet" id="Q9QZR9"/>
<dbReference type="PhosphoSitePlus" id="Q9QZR9"/>
<dbReference type="PaxDb" id="10090-ENSMUSP00000084282"/>
<dbReference type="ProteomicsDB" id="279130">
    <molecule id="Q9QZR9-1"/>
</dbReference>
<dbReference type="ProteomicsDB" id="279131">
    <molecule id="Q9QZR9-2"/>
</dbReference>
<dbReference type="Antibodypedia" id="54339">
    <property type="antibodies" value="111 antibodies from 24 providers"/>
</dbReference>
<dbReference type="DNASU" id="12829"/>
<dbReference type="Ensembl" id="ENSMUST00000087050.7">
    <molecule id="Q9QZR9-1"/>
    <property type="protein sequence ID" value="ENSMUSP00000084282.6"/>
    <property type="gene ID" value="ENSMUSG00000067158.10"/>
</dbReference>
<dbReference type="GeneID" id="12829"/>
<dbReference type="KEGG" id="mmu:12829"/>
<dbReference type="UCSC" id="uc033fjy.1">
    <molecule id="Q9QZR9-1"/>
    <property type="organism name" value="mouse"/>
</dbReference>
<dbReference type="AGR" id="MGI:104687"/>
<dbReference type="CTD" id="1286"/>
<dbReference type="MGI" id="MGI:104687">
    <property type="gene designation" value="Col4a4"/>
</dbReference>
<dbReference type="VEuPathDB" id="HostDB:ENSMUSG00000067158"/>
<dbReference type="eggNOG" id="KOG3544">
    <property type="taxonomic scope" value="Eukaryota"/>
</dbReference>
<dbReference type="GeneTree" id="ENSGT00940000153991"/>
<dbReference type="HOGENOM" id="CLU_002023_1_0_1"/>
<dbReference type="InParanoid" id="Q9QZR9"/>
<dbReference type="OMA" id="GDTISCN"/>
<dbReference type="OrthoDB" id="10071882at2759"/>
<dbReference type="PhylomeDB" id="Q9QZR9"/>
<dbReference type="TreeFam" id="TF344135"/>
<dbReference type="Reactome" id="R-MMU-1442490">
    <property type="pathway name" value="Collagen degradation"/>
</dbReference>
<dbReference type="Reactome" id="R-MMU-1474244">
    <property type="pathway name" value="Extracellular matrix organization"/>
</dbReference>
<dbReference type="Reactome" id="R-MMU-1650814">
    <property type="pathway name" value="Collagen biosynthesis and modifying enzymes"/>
</dbReference>
<dbReference type="Reactome" id="R-MMU-186797">
    <property type="pathway name" value="Signaling by PDGF"/>
</dbReference>
<dbReference type="Reactome" id="R-MMU-2022090">
    <property type="pathway name" value="Assembly of collagen fibrils and other multimeric structures"/>
</dbReference>
<dbReference type="Reactome" id="R-MMU-216083">
    <property type="pathway name" value="Integrin cell surface interactions"/>
</dbReference>
<dbReference type="Reactome" id="R-MMU-2243919">
    <property type="pathway name" value="Crosslinking of collagen fibrils"/>
</dbReference>
<dbReference type="Reactome" id="R-MMU-3000157">
    <property type="pathway name" value="Laminin interactions"/>
</dbReference>
<dbReference type="Reactome" id="R-MMU-3000171">
    <property type="pathway name" value="Non-integrin membrane-ECM interactions"/>
</dbReference>
<dbReference type="Reactome" id="R-MMU-419037">
    <property type="pathway name" value="NCAM1 interactions"/>
</dbReference>
<dbReference type="Reactome" id="R-MMU-8948216">
    <property type="pathway name" value="Collagen chain trimerization"/>
</dbReference>
<dbReference type="BioGRID-ORCS" id="12829">
    <property type="hits" value="3 hits in 77 CRISPR screens"/>
</dbReference>
<dbReference type="ChiTaRS" id="Col4a4">
    <property type="organism name" value="mouse"/>
</dbReference>
<dbReference type="PRO" id="PR:Q9QZR9"/>
<dbReference type="Proteomes" id="UP000000589">
    <property type="component" value="Chromosome 1"/>
</dbReference>
<dbReference type="RNAct" id="Q9QZR9">
    <property type="molecule type" value="protein"/>
</dbReference>
<dbReference type="Bgee" id="ENSMUSG00000067158">
    <property type="expression patterns" value="Expressed in epithelium of lens and 90 other cell types or tissues"/>
</dbReference>
<dbReference type="GO" id="GO:0005604">
    <property type="term" value="C:basement membrane"/>
    <property type="evidence" value="ECO:0000314"/>
    <property type="project" value="MGI"/>
</dbReference>
<dbReference type="GO" id="GO:0005587">
    <property type="term" value="C:collagen type IV trimer"/>
    <property type="evidence" value="ECO:0000314"/>
    <property type="project" value="UniProtKB"/>
</dbReference>
<dbReference type="GO" id="GO:0062023">
    <property type="term" value="C:collagen-containing extracellular matrix"/>
    <property type="evidence" value="ECO:0007005"/>
    <property type="project" value="BHF-UCL"/>
</dbReference>
<dbReference type="GO" id="GO:0005576">
    <property type="term" value="C:extracellular region"/>
    <property type="evidence" value="ECO:0007669"/>
    <property type="project" value="UniProtKB-KW"/>
</dbReference>
<dbReference type="GO" id="GO:0005201">
    <property type="term" value="F:extracellular matrix structural constituent"/>
    <property type="evidence" value="ECO:0000353"/>
    <property type="project" value="UniProtKB"/>
</dbReference>
<dbReference type="GO" id="GO:0032836">
    <property type="term" value="P:glomerular basement membrane development"/>
    <property type="evidence" value="ECO:0000315"/>
    <property type="project" value="MGI"/>
</dbReference>
<dbReference type="FunFam" id="2.170.240.10:FF:000001">
    <property type="entry name" value="Collagen IV alpha 1 chain"/>
    <property type="match status" value="1"/>
</dbReference>
<dbReference type="Gene3D" id="2.170.240.10">
    <property type="entry name" value="Collagen IV, non-collagenous"/>
    <property type="match status" value="1"/>
</dbReference>
<dbReference type="InterPro" id="IPR008160">
    <property type="entry name" value="Collagen"/>
</dbReference>
<dbReference type="InterPro" id="IPR001442">
    <property type="entry name" value="Collagen_IV_NC"/>
</dbReference>
<dbReference type="InterPro" id="IPR036954">
    <property type="entry name" value="Collagen_IV_NC_sf"/>
</dbReference>
<dbReference type="InterPro" id="IPR050938">
    <property type="entry name" value="Collagen_Structural_Proteins"/>
</dbReference>
<dbReference type="InterPro" id="IPR016187">
    <property type="entry name" value="CTDL_fold"/>
</dbReference>
<dbReference type="PANTHER" id="PTHR37456:SF5">
    <property type="entry name" value="COLLAGEN TYPE XIII ALPHA 1 CHAIN"/>
    <property type="match status" value="1"/>
</dbReference>
<dbReference type="PANTHER" id="PTHR37456">
    <property type="entry name" value="SI:CH211-266K2.1"/>
    <property type="match status" value="1"/>
</dbReference>
<dbReference type="Pfam" id="PF01413">
    <property type="entry name" value="C4"/>
    <property type="match status" value="2"/>
</dbReference>
<dbReference type="Pfam" id="PF01391">
    <property type="entry name" value="Collagen"/>
    <property type="match status" value="16"/>
</dbReference>
<dbReference type="SMART" id="SM00111">
    <property type="entry name" value="C4"/>
    <property type="match status" value="2"/>
</dbReference>
<dbReference type="SUPFAM" id="SSF56436">
    <property type="entry name" value="C-type lectin-like"/>
    <property type="match status" value="2"/>
</dbReference>
<dbReference type="PROSITE" id="PS51403">
    <property type="entry name" value="NC1_IV"/>
    <property type="match status" value="1"/>
</dbReference>
<name>CO4A4_MOUSE</name>
<reference evidence="13 14" key="1">
    <citation type="journal article" date="1999" name="Genomics">
        <title>Insertional mutation of the collagen genes Col4a3 and Col4a4 in a mouse model of Alport syndrome.</title>
        <authorList>
            <person name="Lu W."/>
            <person name="Phillips C.L."/>
            <person name="Killen P.D."/>
            <person name="Hlaing T."/>
            <person name="Harrison W.R."/>
            <person name="Elder F.F.B."/>
            <person name="Miner J.H."/>
            <person name="Overbeek P.A."/>
            <person name="Meisler M.H."/>
        </authorList>
    </citation>
    <scope>NUCLEOTIDE SEQUENCE [MRNA] (ISOFORM 1)</scope>
    <source>
        <tissue evidence="14">Embryonic kidney</tissue>
    </source>
</reference>
<reference evidence="13 15" key="2">
    <citation type="journal article" date="2004" name="Genome Res.">
        <title>The status, quality, and expansion of the NIH full-length cDNA project: the Mammalian Gene Collection (MGC).</title>
        <authorList>
            <consortium name="The MGC Project Team"/>
        </authorList>
    </citation>
    <scope>NUCLEOTIDE SEQUENCE [LARGE SCALE MRNA] (ISOFORM 2)</scope>
</reference>
<reference evidence="13 16" key="3">
    <citation type="journal article" date="1994" name="J. Cell Biol.">
        <title>Collagen IV alpha 3, alpha 4, and alpha 5 chains in rodent basal laminae: sequence, distribution, association with laminins, and developmental switches.</title>
        <authorList>
            <person name="Miner J.H."/>
            <person name="Sanes J.R."/>
        </authorList>
    </citation>
    <scope>NUCLEOTIDE SEQUENCE [MRNA] OF 1371-1682 (ISOFORM 1)</scope>
    <scope>FUNCTION</scope>
    <scope>ASSOCIATED WITH LAMB2</scope>
    <scope>SUBCELLULAR LOCATION</scope>
    <scope>TISSUE SPECIFICITY</scope>
    <source>
        <strain evidence="16">BALB/cJ</strain>
        <tissue evidence="16">Kidney</tissue>
    </source>
</reference>
<reference evidence="13" key="4">
    <citation type="journal article" date="2000" name="J. Histochem. Cytochem.">
        <title>Nidogen-1. Expression and ultrastructural localization during the onset of mesoderm formation in the early mouse embryo.</title>
        <authorList>
            <person name="Miosge N."/>
            <person name="Quondamatteo F."/>
            <person name="Klenczar C."/>
            <person name="Herken R."/>
        </authorList>
    </citation>
    <scope>FUNCTION</scope>
</reference>
<reference evidence="13" key="5">
    <citation type="journal article" date="2002" name="Matrix Biol.">
        <title>Collagen IV in the developing lens capsule.</title>
        <authorList>
            <person name="Kelley P.B."/>
            <person name="Sado Y."/>
            <person name="Duncan M.K."/>
        </authorList>
    </citation>
    <scope>DEVELOPMENTAL STAGE</scope>
</reference>
<reference key="6">
    <citation type="journal article" date="2018" name="Acta Biomater.">
        <title>Extracellular matrix component expression in human pluripotent stem cell-derived retinal organoids recapitulates retinogenesis in vivo and reveals an important role for IMPG1 and CD44 in the development of photoreceptors and interphotoreceptor matrix.</title>
        <authorList>
            <person name="Felemban M."/>
            <person name="Dorgau B."/>
            <person name="Hunt N.C."/>
            <person name="Hallam D."/>
            <person name="Zerti D."/>
            <person name="Bauer R."/>
            <person name="Ding Y."/>
            <person name="Collin J."/>
            <person name="Steel D."/>
            <person name="Krasnogor N."/>
            <person name="Al-Aama J."/>
            <person name="Lindsay S."/>
            <person name="Mellough C."/>
            <person name="Lako M."/>
        </authorList>
    </citation>
    <scope>TISSUE SPECIFICITY</scope>
</reference>
<sequence length="1682" mass="164096">MRCFFRWTKSFVTAPWSLIFILFTIQYEYGSGKKYGGPCGGRNCSVCQCFPEKGSRGHPGPLGPQGPIGPLGPLGPIGIPGEKGERGDSGSPGPPGEKGDKGPTGVPGFPGVDGVPGHPGPPGPRGKPGVDGYNGSRGDPGYPGERGAPGPGGPPGQPGENGEKGRSVYITGGVKGIQGDRGDPGPPGLPGSRGAQGSPGPMGHAGAPGLAGPIGHPGSPGLKGNPATGLKGQRGEPGEVGQRGPPGPTLLVQPPDLSIYKGEKGVKGMPGMIGPPGPPGRKGAPGVGIKGEKGIPGFPGPRGEPGSHGPPGFPGFKGIQGAAGEPGLFGFLGPKGDLGDRGYPGPPGILLTPAPPLKGVPGDPGPPGYYGEIGDVGLPGPPGPPGRPGETCPGMMGPPGPPGVPGPPGFPGEAGVPGRLDCAPGKPGKPGLPGLPGAPGPEGPPGSDVIYCRPGCPGPMGEKGKVGPPGRRGAKGAKGNKGLCTCPPGPMGPPGPPGPPGRQGSKGDLGLPGWHGEKGDPGQPGAEGPPGPPGRPGAMGPPGHKGEKGDMVISRVKGQKGERGLDGPPGFPGPHGQDGGDGRPGERGDPGPRGDHKDAAPGERGLPGLPGPPGRTGPEGPPGLGFPGPPGQRGLPGEPGRPGTRGFDGTKGQKGDSILCNVSYPGKPGLPGLDGPPGLKGFPGPPGAPGMRCPDGQKGQRGKPGMSGIPGPPGFRGDMGDPGIKGEKGTSPIGPPGPPGSPGKDGQKGIPGDPAFGDPGPPGERGLPGAPGMKGQKGHPGCPGAGGPPGIPGSPGLKGPKGREGSRGFPGIPGSPGHSCERGAPGIPGQPGLPGTPGDPGAPGWKGQPGDMGPSGPAGMKGLPGLPGLPGADGLRGPPGIPGPNGEDGLPGLPGLKGLPGLPGFPGFPGERGKPGPDGEPGRKGEVGEKGWPGLKGDLGERGAKGDRGLPGDAGEAVTSRKGEPGDAGPPGDGGFSGERGDKGSSGMRGGRGDPGRDGLPGLHRGQPGIDGPPGPPGPPGPPGSPGLRGVIGFPGFPGDQGDPGSPGPPGFPGDDGARGPKGYKGDPASQCGPPGPKGEPGSPGYQGRTGVPGEKGFPGDEGPRGPPGRPGQPGSFGPPGCPGDPGMPGLKGHPGEVGDPGPRGDAGDFGRPGPAGVKGPLGSPGLNGLHGLKGEKGTKGASGLLEMGPPGPMGMPGQKGEKGDPGSPGISPPGLPGEKGFPGPPGRPGPPGPAGAPGRAAKGDIPDPGPPGDRGPPGPDGPRGVPGPPGSPGNVDLLKGDPGDCGLPGPPGSRGPPGPPGCQGPPGCDGKDGQKGPMGLPGLPGPPGLPGAPGEKGLPGPPGRKGPVGPPGCRGEPGPPADVDSCPRIPGLPGVPGPRGPEGAMGEPGRRGLPGPGCKGEPGPDGRRGQDGIPGSPGPPGRKGDTGEAGCPGAPGPPGPTGDPGPKGFGPGSLSGFLLVLHSQTDQEPACPVGMPRLWTGYSLLYMEGQEKAHNQDLGLAGSCLPVFSTLPFAYCNIHQVCHYAQRNDRSYWLSSAAPLPMMPLSEEEIRSYISRCAVCEAPAQAVAVHSQDQSIPPCPRTWRSLWIGYSFLMHTGAGDQGGGQALMSPGSCLEDFRAAPFVECQGRQGTCHFFANEYSFWLTTVNPDLQFASGPSPDTLKEVQAQRRKISRCQVCMKHS</sequence>
<keyword id="KW-0025">Alternative splicing</keyword>
<keyword id="KW-0084">Basement membrane</keyword>
<keyword id="KW-0176">Collagen</keyword>
<keyword id="KW-1015">Disulfide bond</keyword>
<keyword id="KW-0272">Extracellular matrix</keyword>
<keyword id="KW-0325">Glycoprotein</keyword>
<keyword id="KW-0379">Hydroxylation</keyword>
<keyword id="KW-1185">Reference proteome</keyword>
<keyword id="KW-0677">Repeat</keyword>
<keyword id="KW-0964">Secreted</keyword>
<keyword id="KW-0732">Signal</keyword>
<comment type="function">
    <text evidence="2 7 11">Type IV collagen is the major structural component of glomerular basement membranes (GBM), forming a 'chicken-wire' meshwork together with laminins, proteoglycans and entactin/nidogen.</text>
</comment>
<comment type="subunit">
    <text evidence="2 11">There are six type IV collagen isoforms, alpha 1(IV)-alpha 6(IV), each of which can form a triple helix structure with 2 other chains to generate type IV collagen network. The alpha 3(IV) chain forms a triple helical protomer with alpha 4(IV) and alpha 5(IV); this triple helical structure dimerizes through NC1-NC1 domain interactions such that the alpha 3(IV), alpha 4(IV) and alpha 5(IV) chains of one protomer connect with the alpha 5(IV), alpha 4(IV) and alpha 3(IV) chains of the opposite protomer, respectively (By similarity). Associates with LAMB2 at the neuromuscular junction and in GBM.</text>
</comment>
<comment type="subcellular location">
    <subcellularLocation>
        <location evidence="4 11">Secreted</location>
        <location evidence="4 11">Extracellular space</location>
        <location evidence="4 11">Extracellular matrix</location>
        <location evidence="4 11">Basement membrane</location>
    </subcellularLocation>
    <text evidence="2 11">Colocalizes with COL4A3 and COL4A5 in GBM, tubular basement membrane (TBM) and synaptic basal lamina (BL).</text>
</comment>
<comment type="alternative products">
    <event type="alternative splicing"/>
    <isoform>
        <id>Q9QZR9-1</id>
        <name evidence="6 11">1</name>
        <sequence type="displayed"/>
    </isoform>
    <isoform>
        <id>Q9QZR9-2</id>
        <name evidence="9">2</name>
        <sequence type="described" ref="VSP_052356 VSP_052357"/>
    </isoform>
</comment>
<comment type="tissue specificity">
    <text evidence="10 11">Expressed in Bruch's membrane, outer plexiform layer, inner nuclear layer, inner plexiform layer, ganglion cell layer, inner limiting membrane and around the blood vessels of the retina (at protein level) (PubMed:29777959). Highly expressed in kidney and lung (PubMed:7962065). Detected at lower levels in heart, muscle and skin (PubMed:7962065).</text>
</comment>
<comment type="developmental stage">
    <text evidence="8">The expression of collagen IV undergoes a developmental shift in the developing lens capsule. During the early stages of lens capsule development expression of collagens alpha 1(IV), alpha 2(IV), alpha 5(IV) and alpha 6(IV) is observed; this is consistent with the presence of fibrillar alpha 1(IV)-alpha 1(IV)-alpha 2(IV) protomers and of elastic alpha 5(IV)-alpha 5(IV)-alpha 6(IV) protomers. In the later stages of development components of the more cross-linked alpha 3(IV)-alpha 4(IV)-alpha 5(IV) protomer appear.</text>
</comment>
<comment type="domain">
    <text evidence="2 4">Alpha chains of type IV collagen have a non-collagenous domain (NC1) at their C-terminus, frequent interruptions of the G-X-Y repeats in the long central triple-helical domain (which may cause flexibility in the triple helix), and a short N-terminal triple-helical 7S domain.</text>
</comment>
<comment type="PTM">
    <text evidence="2 4">Prolines at the third position of the tripeptide repeating unit (G-X-Y) are hydroxylated in some or all of the chains.</text>
</comment>
<comment type="PTM">
    <text evidence="2 4">Type IV collagens contain numerous cysteine residues which are involved in inter- and intramolecular disulfide bonding. 12 of these, located in the NC1 domain, are conserved in all known type IV collagens.</text>
</comment>
<comment type="PTM">
    <text evidence="1">The trimeric structure of the NC1 domains is stabilized by covalent bonds between Lys and Met residues.</text>
</comment>
<comment type="miscellaneous">
    <text evidence="6">The kidneys of transgenic mice where the 5' portions of both COL4A3 and COL4A4 and the shared intergenic promoter region were deleted exhibit morphological and ultrastructural features characteristic of the human hereditary disorder Alport syndrome, including disorganization and multilamellar structure of the GBM and delayed onset glomerulonephritis.</text>
</comment>
<comment type="similarity">
    <text evidence="4">Belongs to the type IV collagen family.</text>
</comment>
<gene>
    <name evidence="17" type="primary">Col4a4</name>
</gene>
<feature type="signal peptide" evidence="3">
    <location>
        <begin position="1"/>
        <end position="32"/>
    </location>
</feature>
<feature type="chain" id="PRO_0000283793" description="Collagen alpha-4(IV) chain" evidence="3">
    <location>
        <begin position="33"/>
        <end position="1682"/>
    </location>
</feature>
<feature type="domain" description="Collagen IV NC1" evidence="4">
    <location>
        <begin position="1457"/>
        <end position="1682"/>
    </location>
</feature>
<feature type="region of interest" description="7S domain" evidence="2">
    <location>
        <begin position="31"/>
        <end position="56"/>
    </location>
</feature>
<feature type="region of interest" description="Disordered" evidence="5">
    <location>
        <begin position="56"/>
        <end position="255"/>
    </location>
</feature>
<feature type="region of interest" description="Triple-helical region" evidence="2">
    <location>
        <begin position="57"/>
        <end position="1451"/>
    </location>
</feature>
<feature type="region of interest" description="Disordered" evidence="5">
    <location>
        <begin position="379"/>
        <end position="1453"/>
    </location>
</feature>
<feature type="short sequence motif" description="Cell attachment site" evidence="3">
    <location>
        <begin position="86"/>
        <end position="88"/>
    </location>
</feature>
<feature type="short sequence motif" description="Cell attachment site" evidence="3">
    <location>
        <begin position="137"/>
        <end position="139"/>
    </location>
</feature>
<feature type="short sequence motif" description="Cell attachment site" evidence="3">
    <location>
        <begin position="181"/>
        <end position="183"/>
    </location>
</feature>
<feature type="short sequence motif" description="Cell attachment site" evidence="3">
    <location>
        <begin position="587"/>
        <end position="589"/>
    </location>
</feature>
<feature type="short sequence motif" description="Cell attachment site" evidence="3">
    <location>
        <begin position="593"/>
        <end position="595"/>
    </location>
</feature>
<feature type="short sequence motif" description="Cell attachment site" evidence="3">
    <location>
        <begin position="716"/>
        <end position="718"/>
    </location>
</feature>
<feature type="short sequence motif" description="Cell attachment site" evidence="3">
    <location>
        <begin position="980"/>
        <end position="982"/>
    </location>
</feature>
<feature type="short sequence motif" description="Cell attachment site" evidence="3">
    <location>
        <begin position="992"/>
        <end position="994"/>
    </location>
</feature>
<feature type="short sequence motif" description="Cell attachment site" evidence="3">
    <location>
        <begin position="1144"/>
        <end position="1146"/>
    </location>
</feature>
<feature type="compositionally biased region" description="Low complexity" evidence="5">
    <location>
        <begin position="103"/>
        <end position="116"/>
    </location>
</feature>
<feature type="compositionally biased region" description="Pro residues" evidence="5">
    <location>
        <begin position="396"/>
        <end position="410"/>
    </location>
</feature>
<feature type="compositionally biased region" description="Low complexity" evidence="5">
    <location>
        <begin position="411"/>
        <end position="426"/>
    </location>
</feature>
<feature type="compositionally biased region" description="Pro residues" evidence="5">
    <location>
        <begin position="487"/>
        <end position="500"/>
    </location>
</feature>
<feature type="compositionally biased region" description="Basic and acidic residues" evidence="5">
    <location>
        <begin position="578"/>
        <end position="601"/>
    </location>
</feature>
<feature type="compositionally biased region" description="Pro residues" evidence="5">
    <location>
        <begin position="609"/>
        <end position="621"/>
    </location>
</feature>
<feature type="compositionally biased region" description="Low complexity" evidence="5">
    <location>
        <begin position="632"/>
        <end position="647"/>
    </location>
</feature>
<feature type="compositionally biased region" description="Low complexity" evidence="5">
    <location>
        <begin position="665"/>
        <end position="682"/>
    </location>
</feature>
<feature type="compositionally biased region" description="Low complexity" evidence="5">
    <location>
        <begin position="742"/>
        <end position="758"/>
    </location>
</feature>
<feature type="compositionally biased region" description="Low complexity" evidence="5">
    <location>
        <begin position="857"/>
        <end position="902"/>
    </location>
</feature>
<feature type="compositionally biased region" description="Basic and acidic residues" evidence="5">
    <location>
        <begin position="911"/>
        <end position="929"/>
    </location>
</feature>
<feature type="compositionally biased region" description="Basic and acidic residues" evidence="5">
    <location>
        <begin position="938"/>
        <end position="950"/>
    </location>
</feature>
<feature type="compositionally biased region" description="Gly residues" evidence="5">
    <location>
        <begin position="969"/>
        <end position="978"/>
    </location>
</feature>
<feature type="compositionally biased region" description="Low complexity" evidence="5">
    <location>
        <begin position="998"/>
        <end position="1010"/>
    </location>
</feature>
<feature type="compositionally biased region" description="Pro residues" evidence="5">
    <location>
        <begin position="1011"/>
        <end position="1025"/>
    </location>
</feature>
<feature type="compositionally biased region" description="Low complexity" evidence="5">
    <location>
        <begin position="1034"/>
        <end position="1044"/>
    </location>
</feature>
<feature type="compositionally biased region" description="Pro residues" evidence="5">
    <location>
        <begin position="1223"/>
        <end position="1235"/>
    </location>
</feature>
<feature type="compositionally biased region" description="Pro residues" evidence="5">
    <location>
        <begin position="1248"/>
        <end position="1272"/>
    </location>
</feature>
<feature type="compositionally biased region" description="Pro residues" evidence="5">
    <location>
        <begin position="1289"/>
        <end position="1304"/>
    </location>
</feature>
<feature type="compositionally biased region" description="Pro residues" evidence="5">
    <location>
        <begin position="1340"/>
        <end position="1351"/>
    </location>
</feature>
<feature type="compositionally biased region" description="Pro residues" evidence="5">
    <location>
        <begin position="1435"/>
        <end position="1444"/>
    </location>
</feature>
<feature type="site" description="Cleavage; by collagenase" evidence="1">
    <location>
        <begin position="1197"/>
        <end position="1198"/>
    </location>
</feature>
<feature type="glycosylation site" description="N-linked (GlcNAc...) asparagine" evidence="3">
    <location>
        <position position="43"/>
    </location>
</feature>
<feature type="glycosylation site" description="N-linked (GlcNAc...) asparagine" evidence="3">
    <location>
        <position position="134"/>
    </location>
</feature>
<feature type="glycosylation site" description="N-linked (GlcNAc...) asparagine" evidence="3">
    <location>
        <position position="661"/>
    </location>
</feature>
<feature type="disulfide bond" description="Or C-1472 with C-1558" evidence="2 4">
    <location>
        <begin position="1472"/>
        <end position="1561"/>
    </location>
</feature>
<feature type="disulfide bond" description="Or C-1505 with C-1561" evidence="2 4">
    <location>
        <begin position="1505"/>
        <end position="1558"/>
    </location>
</feature>
<feature type="disulfide bond" evidence="2 4">
    <location>
        <begin position="1517"/>
        <end position="1523"/>
    </location>
</feature>
<feature type="disulfide bond" description="Or C-1580 with C-1675" evidence="2 4">
    <location>
        <begin position="1580"/>
        <end position="1678"/>
    </location>
</feature>
<feature type="disulfide bond" description="Or C-1614 with C-1678" evidence="2 4">
    <location>
        <begin position="1614"/>
        <end position="1675"/>
    </location>
</feature>
<feature type="disulfide bond" evidence="2 4">
    <location>
        <begin position="1626"/>
        <end position="1633"/>
    </location>
</feature>
<feature type="splice variant" id="VSP_052356" description="In isoform 2." evidence="12">
    <original>GRRGAKGAKGNKGLCTCPP</original>
    <variation>PLWIKQTLYMWSCSPFSFY</variation>
    <location>
        <begin position="470"/>
        <end position="488"/>
    </location>
</feature>
<feature type="splice variant" id="VSP_052357" description="In isoform 2." evidence="12">
    <location>
        <begin position="489"/>
        <end position="1682"/>
    </location>
</feature>
<feature type="sequence conflict" description="In Ref. 3; CAA84530." evidence="13" ref="3">
    <original>L</original>
    <variation>F</variation>
    <location>
        <position position="1373"/>
    </location>
</feature>
<feature type="sequence conflict" description="In Ref. 3; CAA84530." evidence="13" ref="3">
    <original>A</original>
    <variation>P</variation>
    <location>
        <position position="1654"/>
    </location>
</feature>
<protein>
    <recommendedName>
        <fullName>Collagen alpha-4(IV) chain</fullName>
    </recommendedName>
</protein>
<organism>
    <name type="scientific">Mus musculus</name>
    <name type="common">Mouse</name>
    <dbReference type="NCBI Taxonomy" id="10090"/>
    <lineage>
        <taxon>Eukaryota</taxon>
        <taxon>Metazoa</taxon>
        <taxon>Chordata</taxon>
        <taxon>Craniata</taxon>
        <taxon>Vertebrata</taxon>
        <taxon>Euteleostomi</taxon>
        <taxon>Mammalia</taxon>
        <taxon>Eutheria</taxon>
        <taxon>Euarchontoglires</taxon>
        <taxon>Glires</taxon>
        <taxon>Rodentia</taxon>
        <taxon>Myomorpha</taxon>
        <taxon>Muroidea</taxon>
        <taxon>Muridae</taxon>
        <taxon>Murinae</taxon>
        <taxon>Mus</taxon>
        <taxon>Mus</taxon>
    </lineage>
</organism>
<proteinExistence type="evidence at protein level"/>
<accession>Q9QZR9</accession>
<accession>Q149M2</accession>
<accession>Q64457</accession>
<evidence type="ECO:0000250" key="1"/>
<evidence type="ECO:0000250" key="2">
    <source>
        <dbReference type="UniProtKB" id="P53420"/>
    </source>
</evidence>
<evidence type="ECO:0000255" key="3"/>
<evidence type="ECO:0000255" key="4">
    <source>
        <dbReference type="PROSITE-ProRule" id="PRU00736"/>
    </source>
</evidence>
<evidence type="ECO:0000256" key="5">
    <source>
        <dbReference type="SAM" id="MobiDB-lite"/>
    </source>
</evidence>
<evidence type="ECO:0000269" key="6">
    <source>
    </source>
</evidence>
<evidence type="ECO:0000269" key="7">
    <source>
    </source>
</evidence>
<evidence type="ECO:0000269" key="8">
    <source>
    </source>
</evidence>
<evidence type="ECO:0000269" key="9">
    <source>
    </source>
</evidence>
<evidence type="ECO:0000269" key="10">
    <source>
    </source>
</evidence>
<evidence type="ECO:0000269" key="11">
    <source>
    </source>
</evidence>
<evidence type="ECO:0000303" key="12">
    <source>
    </source>
</evidence>
<evidence type="ECO:0000305" key="13"/>
<evidence type="ECO:0000312" key="14">
    <source>
        <dbReference type="EMBL" id="AAD50450.1"/>
    </source>
</evidence>
<evidence type="ECO:0000312" key="15">
    <source>
        <dbReference type="EMBL" id="AAI17710.1"/>
    </source>
</evidence>
<evidence type="ECO:0000312" key="16">
    <source>
        <dbReference type="EMBL" id="CAA84530.1"/>
    </source>
</evidence>
<evidence type="ECO:0000312" key="17">
    <source>
        <dbReference type="MGI" id="MGI:104687"/>
    </source>
</evidence>